<reference key="1">
    <citation type="journal article" date="2000" name="Gene">
        <title>Primary structural features of the 20S proteasome subunits of rice (Oryza sativa).</title>
        <authorList>
            <person name="Sassa H."/>
            <person name="Oguchi S."/>
            <person name="Inoue T."/>
            <person name="Hirano H."/>
        </authorList>
    </citation>
    <scope>NUCLEOTIDE SEQUENCE [MRNA]</scope>
    <source>
        <strain>cv. Nipponbare</strain>
    </source>
</reference>
<reference key="2">
    <citation type="journal article" date="2005" name="BMC Biol.">
        <title>The sequence of rice chromosomes 11 and 12, rich in disease resistance genes and recent gene duplications.</title>
        <authorList>
            <consortium name="The rice chromosomes 11 and 12 sequencing consortia"/>
        </authorList>
    </citation>
    <scope>NUCLEOTIDE SEQUENCE [LARGE SCALE GENOMIC DNA]</scope>
    <source>
        <strain>cv. Nipponbare</strain>
    </source>
</reference>
<reference key="3">
    <citation type="journal article" date="2005" name="Nature">
        <title>The map-based sequence of the rice genome.</title>
        <authorList>
            <consortium name="International rice genome sequencing project (IRGSP)"/>
        </authorList>
    </citation>
    <scope>NUCLEOTIDE SEQUENCE [LARGE SCALE GENOMIC DNA]</scope>
    <source>
        <strain>cv. Nipponbare</strain>
    </source>
</reference>
<reference key="4">
    <citation type="journal article" date="2008" name="Nucleic Acids Res.">
        <title>The rice annotation project database (RAP-DB): 2008 update.</title>
        <authorList>
            <consortium name="The rice annotation project (RAP)"/>
        </authorList>
    </citation>
    <scope>GENOME REANNOTATION</scope>
    <source>
        <strain>cv. Nipponbare</strain>
    </source>
</reference>
<reference key="5">
    <citation type="journal article" date="2013" name="Rice">
        <title>Improvement of the Oryza sativa Nipponbare reference genome using next generation sequence and optical map data.</title>
        <authorList>
            <person name="Kawahara Y."/>
            <person name="de la Bastide M."/>
            <person name="Hamilton J.P."/>
            <person name="Kanamori H."/>
            <person name="McCombie W.R."/>
            <person name="Ouyang S."/>
            <person name="Schwartz D.C."/>
            <person name="Tanaka T."/>
            <person name="Wu J."/>
            <person name="Zhou S."/>
            <person name="Childs K.L."/>
            <person name="Davidson R.M."/>
            <person name="Lin H."/>
            <person name="Quesada-Ocampo L."/>
            <person name="Vaillancourt B."/>
            <person name="Sakai H."/>
            <person name="Lee S.S."/>
            <person name="Kim J."/>
            <person name="Numa H."/>
            <person name="Itoh T."/>
            <person name="Buell C.R."/>
            <person name="Matsumoto T."/>
        </authorList>
    </citation>
    <scope>GENOME REANNOTATION</scope>
    <source>
        <strain>cv. Nipponbare</strain>
    </source>
</reference>
<reference key="6">
    <citation type="journal article" date="2005" name="PLoS Biol.">
        <title>The genomes of Oryza sativa: a history of duplications.</title>
        <authorList>
            <person name="Yu J."/>
            <person name="Wang J."/>
            <person name="Lin W."/>
            <person name="Li S."/>
            <person name="Li H."/>
            <person name="Zhou J."/>
            <person name="Ni P."/>
            <person name="Dong W."/>
            <person name="Hu S."/>
            <person name="Zeng C."/>
            <person name="Zhang J."/>
            <person name="Zhang Y."/>
            <person name="Li R."/>
            <person name="Xu Z."/>
            <person name="Li S."/>
            <person name="Li X."/>
            <person name="Zheng H."/>
            <person name="Cong L."/>
            <person name="Lin L."/>
            <person name="Yin J."/>
            <person name="Geng J."/>
            <person name="Li G."/>
            <person name="Shi J."/>
            <person name="Liu J."/>
            <person name="Lv H."/>
            <person name="Li J."/>
            <person name="Wang J."/>
            <person name="Deng Y."/>
            <person name="Ran L."/>
            <person name="Shi X."/>
            <person name="Wang X."/>
            <person name="Wu Q."/>
            <person name="Li C."/>
            <person name="Ren X."/>
            <person name="Wang J."/>
            <person name="Wang X."/>
            <person name="Li D."/>
            <person name="Liu D."/>
            <person name="Zhang X."/>
            <person name="Ji Z."/>
            <person name="Zhao W."/>
            <person name="Sun Y."/>
            <person name="Zhang Z."/>
            <person name="Bao J."/>
            <person name="Han Y."/>
            <person name="Dong L."/>
            <person name="Ji J."/>
            <person name="Chen P."/>
            <person name="Wu S."/>
            <person name="Liu J."/>
            <person name="Xiao Y."/>
            <person name="Bu D."/>
            <person name="Tan J."/>
            <person name="Yang L."/>
            <person name="Ye C."/>
            <person name="Zhang J."/>
            <person name="Xu J."/>
            <person name="Zhou Y."/>
            <person name="Yu Y."/>
            <person name="Zhang B."/>
            <person name="Zhuang S."/>
            <person name="Wei H."/>
            <person name="Liu B."/>
            <person name="Lei M."/>
            <person name="Yu H."/>
            <person name="Li Y."/>
            <person name="Xu H."/>
            <person name="Wei S."/>
            <person name="He X."/>
            <person name="Fang L."/>
            <person name="Zhang Z."/>
            <person name="Zhang Y."/>
            <person name="Huang X."/>
            <person name="Su Z."/>
            <person name="Tong W."/>
            <person name="Li J."/>
            <person name="Tong Z."/>
            <person name="Li S."/>
            <person name="Ye J."/>
            <person name="Wang L."/>
            <person name="Fang L."/>
            <person name="Lei T."/>
            <person name="Chen C.-S."/>
            <person name="Chen H.-C."/>
            <person name="Xu Z."/>
            <person name="Li H."/>
            <person name="Huang H."/>
            <person name="Zhang F."/>
            <person name="Xu H."/>
            <person name="Li N."/>
            <person name="Zhao C."/>
            <person name="Li S."/>
            <person name="Dong L."/>
            <person name="Huang Y."/>
            <person name="Li L."/>
            <person name="Xi Y."/>
            <person name="Qi Q."/>
            <person name="Li W."/>
            <person name="Zhang B."/>
            <person name="Hu W."/>
            <person name="Zhang Y."/>
            <person name="Tian X."/>
            <person name="Jiao Y."/>
            <person name="Liang X."/>
            <person name="Jin J."/>
            <person name="Gao L."/>
            <person name="Zheng W."/>
            <person name="Hao B."/>
            <person name="Liu S.-M."/>
            <person name="Wang W."/>
            <person name="Yuan L."/>
            <person name="Cao M."/>
            <person name="McDermott J."/>
            <person name="Samudrala R."/>
            <person name="Wang J."/>
            <person name="Wong G.K.-S."/>
            <person name="Yang H."/>
        </authorList>
    </citation>
    <scope>NUCLEOTIDE SEQUENCE [LARGE SCALE GENOMIC DNA]</scope>
    <source>
        <strain>cv. Nipponbare</strain>
    </source>
</reference>
<reference key="7">
    <citation type="journal article" date="2003" name="Science">
        <title>Collection, mapping, and annotation of over 28,000 cDNA clones from japonica rice.</title>
        <authorList>
            <consortium name="The rice full-length cDNA consortium"/>
        </authorList>
    </citation>
    <scope>NUCLEOTIDE SEQUENCE [LARGE SCALE MRNA]</scope>
    <source>
        <strain>cv. Nipponbare</strain>
    </source>
</reference>
<protein>
    <recommendedName>
        <fullName>Proteasome subunit alpha type-5</fullName>
    </recommendedName>
    <alternativeName>
        <fullName>20S proteasome alpha subunit E</fullName>
    </alternativeName>
    <alternativeName>
        <fullName>20S proteasome subunit alpha-5</fullName>
    </alternativeName>
</protein>
<feature type="chain" id="PRO_0000124126" description="Proteasome subunit alpha type-5">
    <location>
        <begin position="1"/>
        <end position="237"/>
    </location>
</feature>
<evidence type="ECO:0000250" key="1"/>
<evidence type="ECO:0000255" key="2">
    <source>
        <dbReference type="PROSITE-ProRule" id="PRU00808"/>
    </source>
</evidence>
<evidence type="ECO:0000305" key="3"/>
<evidence type="ECO:0000312" key="4">
    <source>
        <dbReference type="EMBL" id="EEE52464.1"/>
    </source>
</evidence>
<name>PSA5_ORYSJ</name>
<keyword id="KW-0963">Cytoplasm</keyword>
<keyword id="KW-0539">Nucleus</keyword>
<keyword id="KW-0647">Proteasome</keyword>
<keyword id="KW-1185">Reference proteome</keyword>
<organism>
    <name type="scientific">Oryza sativa subsp. japonica</name>
    <name type="common">Rice</name>
    <dbReference type="NCBI Taxonomy" id="39947"/>
    <lineage>
        <taxon>Eukaryota</taxon>
        <taxon>Viridiplantae</taxon>
        <taxon>Streptophyta</taxon>
        <taxon>Embryophyta</taxon>
        <taxon>Tracheophyta</taxon>
        <taxon>Spermatophyta</taxon>
        <taxon>Magnoliopsida</taxon>
        <taxon>Liliopsida</taxon>
        <taxon>Poales</taxon>
        <taxon>Poaceae</taxon>
        <taxon>BOP clade</taxon>
        <taxon>Oryzoideae</taxon>
        <taxon>Oryzeae</taxon>
        <taxon>Oryzinae</taxon>
        <taxon>Oryza</taxon>
        <taxon>Oryza sativa</taxon>
    </lineage>
</organism>
<comment type="function">
    <text>The proteasome is a multicatalytic proteinase complex which is characterized by its ability to cleave peptides with Arg, Phe, Tyr, Leu, and Glu adjacent to the leaving group at neutral or slightly basic pH. The proteasome has an ATP-dependent proteolytic activity.</text>
</comment>
<comment type="subunit">
    <text evidence="1">The 26S proteasome consists of a 20S proteasome core and two 19S regulatory subunits. The 20S proteasome core is composed of 28 subunits that are arranged in four stacked rings, resulting in a barrel-shaped structure. The two end rings are each formed by seven alpha subunits, and the two central rings are each formed by seven beta subunits. The catalytic chamber with the active sites is on the inside of the barrel (By similarity).</text>
</comment>
<comment type="subcellular location">
    <subcellularLocation>
        <location evidence="1">Cytoplasm</location>
    </subcellularLocation>
    <subcellularLocation>
        <location evidence="1">Nucleus</location>
    </subcellularLocation>
</comment>
<comment type="similarity">
    <text evidence="2">Belongs to the peptidase T1A family.</text>
</comment>
<comment type="sequence caution" evidence="3">
    <conflict type="erroneous gene model prediction">
        <sequence resource="EMBL-CDS" id="ABA94697"/>
    </conflict>
</comment>
<proteinExistence type="evidence at transcript level"/>
<accession>Q9LSU1</accession>
<accession>Q0IRM4</accession>
<accession>Q2R171</accession>
<accession>Q2R172</accession>
<dbReference type="EMBL" id="AB026561">
    <property type="protein sequence ID" value="BAA96832.1"/>
    <property type="molecule type" value="mRNA"/>
</dbReference>
<dbReference type="EMBL" id="DP000010">
    <property type="protein sequence ID" value="ABA94696.1"/>
    <property type="molecule type" value="Genomic_DNA"/>
</dbReference>
<dbReference type="EMBL" id="DP000010">
    <property type="protein sequence ID" value="ABA94697.1"/>
    <property type="status" value="ALT_SEQ"/>
    <property type="molecule type" value="Genomic_DNA"/>
</dbReference>
<dbReference type="EMBL" id="AP008217">
    <property type="protein sequence ID" value="BAF28641.1"/>
    <property type="molecule type" value="Genomic_DNA"/>
</dbReference>
<dbReference type="EMBL" id="AP014967">
    <property type="protein sequence ID" value="BAT14862.1"/>
    <property type="molecule type" value="Genomic_DNA"/>
</dbReference>
<dbReference type="EMBL" id="CM000148">
    <property type="protein sequence ID" value="EEE52464.1"/>
    <property type="molecule type" value="Genomic_DNA"/>
</dbReference>
<dbReference type="EMBL" id="AK059521">
    <property type="protein sequence ID" value="BAG87018.1"/>
    <property type="molecule type" value="mRNA"/>
</dbReference>
<dbReference type="EMBL" id="AK103487">
    <property type="protein sequence ID" value="BAG96108.1"/>
    <property type="molecule type" value="mRNA"/>
</dbReference>
<dbReference type="RefSeq" id="XP_015617773.1">
    <property type="nucleotide sequence ID" value="XM_015762287.1"/>
</dbReference>
<dbReference type="SMR" id="Q9LSU1"/>
<dbReference type="FunCoup" id="Q9LSU1">
    <property type="interactions" value="2869"/>
</dbReference>
<dbReference type="STRING" id="39947.Q9LSU1"/>
<dbReference type="PaxDb" id="39947-Q9LSU1"/>
<dbReference type="EnsemblPlants" id="Os11t0615700-01">
    <property type="protein sequence ID" value="Os11t0615700-01"/>
    <property type="gene ID" value="Os11g0615700"/>
</dbReference>
<dbReference type="EnsemblPlants" id="Os11t0615700-02">
    <property type="protein sequence ID" value="Os11t0615700-02"/>
    <property type="gene ID" value="Os11g0615700"/>
</dbReference>
<dbReference type="Gramene" id="Os11t0615700-01">
    <property type="protein sequence ID" value="Os11t0615700-01"/>
    <property type="gene ID" value="Os11g0615700"/>
</dbReference>
<dbReference type="Gramene" id="Os11t0615700-02">
    <property type="protein sequence ID" value="Os11t0615700-02"/>
    <property type="gene ID" value="Os11g0615700"/>
</dbReference>
<dbReference type="KEGG" id="dosa:Os11g0615700"/>
<dbReference type="eggNOG" id="KOG0176">
    <property type="taxonomic scope" value="Eukaryota"/>
</dbReference>
<dbReference type="HOGENOM" id="CLU_035750_4_2_1"/>
<dbReference type="InParanoid" id="Q9LSU1"/>
<dbReference type="OMA" id="RSMIDHA"/>
<dbReference type="OrthoDB" id="431557at2759"/>
<dbReference type="Proteomes" id="UP000000763">
    <property type="component" value="Chromosome 11"/>
</dbReference>
<dbReference type="Proteomes" id="UP000007752">
    <property type="component" value="Chromosome 11"/>
</dbReference>
<dbReference type="Proteomes" id="UP000059680">
    <property type="component" value="Chromosome 11"/>
</dbReference>
<dbReference type="GO" id="GO:0005737">
    <property type="term" value="C:cytoplasm"/>
    <property type="evidence" value="ECO:0007669"/>
    <property type="project" value="UniProtKB-SubCell"/>
</dbReference>
<dbReference type="GO" id="GO:0005634">
    <property type="term" value="C:nucleus"/>
    <property type="evidence" value="ECO:0000318"/>
    <property type="project" value="GO_Central"/>
</dbReference>
<dbReference type="GO" id="GO:0019773">
    <property type="term" value="C:proteasome core complex, alpha-subunit complex"/>
    <property type="evidence" value="ECO:0000250"/>
    <property type="project" value="UniProtKB"/>
</dbReference>
<dbReference type="GO" id="GO:0043161">
    <property type="term" value="P:proteasome-mediated ubiquitin-dependent protein catabolic process"/>
    <property type="evidence" value="ECO:0000318"/>
    <property type="project" value="GO_Central"/>
</dbReference>
<dbReference type="CDD" id="cd03753">
    <property type="entry name" value="proteasome_alpha_type_5"/>
    <property type="match status" value="1"/>
</dbReference>
<dbReference type="FunFam" id="3.60.20.10:FF:000029">
    <property type="entry name" value="Proteasome subunit alpha type"/>
    <property type="match status" value="1"/>
</dbReference>
<dbReference type="Gene3D" id="3.60.20.10">
    <property type="entry name" value="Glutamine Phosphoribosylpyrophosphate, subunit 1, domain 1"/>
    <property type="match status" value="1"/>
</dbReference>
<dbReference type="InterPro" id="IPR029055">
    <property type="entry name" value="Ntn_hydrolases_N"/>
</dbReference>
<dbReference type="InterPro" id="IPR050115">
    <property type="entry name" value="Proteasome_alpha"/>
</dbReference>
<dbReference type="InterPro" id="IPR023332">
    <property type="entry name" value="Proteasome_alpha-type"/>
</dbReference>
<dbReference type="InterPro" id="IPR033812">
    <property type="entry name" value="Proteasome_alpha_type_5"/>
</dbReference>
<dbReference type="InterPro" id="IPR000426">
    <property type="entry name" value="Proteasome_asu_N"/>
</dbReference>
<dbReference type="InterPro" id="IPR001353">
    <property type="entry name" value="Proteasome_sua/b"/>
</dbReference>
<dbReference type="NCBIfam" id="NF003075">
    <property type="entry name" value="PRK03996.1"/>
    <property type="match status" value="1"/>
</dbReference>
<dbReference type="PANTHER" id="PTHR11599">
    <property type="entry name" value="PROTEASOME SUBUNIT ALPHA/BETA"/>
    <property type="match status" value="1"/>
</dbReference>
<dbReference type="Pfam" id="PF00227">
    <property type="entry name" value="Proteasome"/>
    <property type="match status" value="1"/>
</dbReference>
<dbReference type="Pfam" id="PF10584">
    <property type="entry name" value="Proteasome_A_N"/>
    <property type="match status" value="1"/>
</dbReference>
<dbReference type="SMART" id="SM00948">
    <property type="entry name" value="Proteasome_A_N"/>
    <property type="match status" value="1"/>
</dbReference>
<dbReference type="SUPFAM" id="SSF56235">
    <property type="entry name" value="N-terminal nucleophile aminohydrolases (Ntn hydrolases)"/>
    <property type="match status" value="1"/>
</dbReference>
<dbReference type="PROSITE" id="PS00388">
    <property type="entry name" value="PROTEASOME_ALPHA_1"/>
    <property type="match status" value="1"/>
</dbReference>
<dbReference type="PROSITE" id="PS51475">
    <property type="entry name" value="PROTEASOME_ALPHA_2"/>
    <property type="match status" value="1"/>
</dbReference>
<gene>
    <name type="primary">PAE1</name>
    <name type="ordered locus">Os11g0615700</name>
    <name type="ordered locus">LOC_Os11g40140</name>
    <name evidence="4" type="ORF">OsJ_34630</name>
</gene>
<sequence length="237" mass="25993">MFLTRTEYDRGVNTFSPEGRLFQVEYAIEAIKLGSTAIGLKTKDGVVLAVEKRVTSPLLEPSSVEKIMEIDEHIGCAMSGLIADARTLVEHARVETQNHRFSYGEPMTVESTTQAICDLALRFGEGDEESMSRPFGVSLLIAGHDENGPSLYYTDPSGTFWQCNAKAIGSGSEGADSSLQEQYNKELTLQEAETIALSILKQVMEEKVTPNNVDIAKVSPNYHLYTPAEVEAVIARL</sequence>